<comment type="function">
    <text evidence="1 2">Catalyzes the cis-trans isomerization of proline imidic peptide bonds in oligopeptides (By similarity). Exerts a strong chemotactic effect on leukocytes partly through activation of one of its membrane receptors BSG/CD147, initiating a signaling cascade that culminates in MAPK/ERK activation (By similarity). Activates endothelial cells (ECs) in a proinflammatory manner by stimulating activation of NF-kappa-B and ERK, JNK and p38 MAP-kinases and by inducing expression of adhesion molecules including SELE and VCAM1 (By similarity). Induces apoptosis in ECs by promoting the FOXO1-dependent expression of CCL2 and BCL2L11 which are involved in EC chemotaxis and apoptosis (By similarity). In response to oxidative stress, initiates proapoptotic and antiapoptotic signaling in ECs via activation of NF-kappa-B and AKT1 and up-regulation of antiapoptotic protein BCL2 (By similarity). Negatively regulates MAP3K5/ASK1 kinase activity, autophosphorylation and oxidative stress-induced apoptosis mediated by MAP3K5/ASK1 (By similarity). Necessary for the assembly of TARDBP in heterogeneous nuclear ribonucleoprotein (hnRNP) complexes and regulates TARDBP binding to RNA UG repeats and TARDBP-dependent expression of HDAC6, ATG7 and VCP which are involved in clearance of protein aggregates (By similarity). Plays an important role in platelet activation and aggregation (By similarity). Regulates calcium mobilization and integrin ITGA2B:ITGB3 bidirectional signaling via increased ROS production as well as by facilitating the interaction between integrin and the cell cytoskeleton (By similarity). Binds heparan sulfate glycosaminoglycans (By similarity).</text>
</comment>
<comment type="catalytic activity">
    <reaction evidence="2">
        <text>[protein]-peptidylproline (omega=180) = [protein]-peptidylproline (omega=0)</text>
        <dbReference type="Rhea" id="RHEA:16237"/>
        <dbReference type="Rhea" id="RHEA-COMP:10747"/>
        <dbReference type="Rhea" id="RHEA-COMP:10748"/>
        <dbReference type="ChEBI" id="CHEBI:83833"/>
        <dbReference type="ChEBI" id="CHEBI:83834"/>
        <dbReference type="EC" id="5.2.1.8"/>
    </reaction>
</comment>
<comment type="activity regulation">
    <text evidence="2">Binds cyclosporin A (CsA). CsA mediates some of its effects via an inhibitory action on PPIase.</text>
</comment>
<comment type="subunit">
    <text evidence="1 2">Interacts with protein phosphatase PPP3CA/calcineurin A (By similarity). Interacts with isoform 2 of BSG/CD147 (By similarity). Interacts with FOXO1; the interaction promotes FOXO1 dephosphorylation, nuclear accumulation and transcriptional activity (By similarity). Interacts with integrin ITGA2B:ITGB3; the interaction is ROS and peptidyl-prolyl cis-trans isomerase (PPIase) activity-dependent and is increased in the presence of thrombin (By similarity). Interacts with MAP3K5 (By similarity). Interacts with TARDBP; the interaction is dependent on the RNA-binding activity of TARDBP and the PPIase activity of PPIA/CYPA and the acetylation of PPIA/CYPA at Lys-125 favors the interaction (By similarity). Interacts with HNRNPA1, HNRNPA2B1, HNRNPC, RBMX, HNRNPK and HNRNPM (By similarity).</text>
</comment>
<comment type="subcellular location">
    <subcellularLocation>
        <location evidence="2">Cytoplasm</location>
    </subcellularLocation>
    <subcellularLocation>
        <location evidence="2">Secreted</location>
    </subcellularLocation>
    <subcellularLocation>
        <location evidence="2">Nucleus</location>
    </subcellularLocation>
    <text evidence="2">Secretion occurs in response to oxidative stress in vascular smooth muscle through a vesicular secretory pathway that involves actin remodeling and myosin II activation, and mediates ERK1/2 activation.</text>
</comment>
<comment type="PTM">
    <text evidence="2">Acetylation at Lys-125 markedly inhibits catalysis of cis to trans isomerization (By similarity). PPIA acetylation also antagonizes the immunosuppressive effects of cyclosporine by inhibiting the sequential steps of cyclosporine binding and calcineurin inhibition (By similarity). Acetylation at Lys-125 favors the interaction with TARDBP (By similarity).</text>
</comment>
<comment type="similarity">
    <text evidence="5">Belongs to the cyclophilin-type PPIase family. PPIase A subfamily.</text>
</comment>
<protein>
    <recommendedName>
        <fullName>Peptidyl-prolyl cis-trans isomerase A</fullName>
        <shortName>PPIase A</shortName>
        <ecNumber evidence="2">5.2.1.8</ecNumber>
    </recommendedName>
    <alternativeName>
        <fullName>Cyclophilin A</fullName>
    </alternativeName>
    <alternativeName>
        <fullName>Cyclosporin A-binding protein</fullName>
    </alternativeName>
    <alternativeName>
        <fullName>Rotamase A</fullName>
    </alternativeName>
    <component>
        <recommendedName>
            <fullName>Peptidyl-prolyl cis-trans isomerase A, N-terminally processed</fullName>
        </recommendedName>
    </component>
</protein>
<proteinExistence type="evidence at protein level"/>
<name>PPIA_MACMU</name>
<dbReference type="EC" id="5.2.1.8" evidence="2"/>
<dbReference type="EMBL" id="AF023861">
    <property type="protein sequence ID" value="AAB81961.1"/>
    <property type="molecule type" value="mRNA"/>
</dbReference>
<dbReference type="EMBL" id="DQ251283">
    <property type="protein sequence ID" value="ABB77883.1"/>
    <property type="molecule type" value="Genomic_DNA"/>
</dbReference>
<dbReference type="RefSeq" id="NP_001027981.1">
    <property type="nucleotide sequence ID" value="NM_001032809.1"/>
</dbReference>
<dbReference type="PDB" id="2WLW">
    <property type="method" value="X-ray"/>
    <property type="resolution" value="1.50 A"/>
    <property type="chains" value="A=1-165"/>
</dbReference>
<dbReference type="PDB" id="4DGA">
    <property type="method" value="X-ray"/>
    <property type="resolution" value="1.90 A"/>
    <property type="chains" value="A/B=1-165"/>
</dbReference>
<dbReference type="PDB" id="4DGB">
    <property type="method" value="X-ray"/>
    <property type="resolution" value="1.70 A"/>
    <property type="chains" value="A=1-165"/>
</dbReference>
<dbReference type="PDB" id="4DGC">
    <property type="method" value="X-ray"/>
    <property type="resolution" value="2.65 A"/>
    <property type="chains" value="A/B/C/D/E=1-165"/>
</dbReference>
<dbReference type="PDB" id="4DGD">
    <property type="method" value="X-ray"/>
    <property type="resolution" value="1.40 A"/>
    <property type="chains" value="A=1-165"/>
</dbReference>
<dbReference type="PDB" id="4DGE">
    <property type="method" value="X-ray"/>
    <property type="resolution" value="2.20 A"/>
    <property type="chains" value="A/B=1-165"/>
</dbReference>
<dbReference type="PDBsum" id="2WLW"/>
<dbReference type="PDBsum" id="4DGA"/>
<dbReference type="PDBsum" id="4DGB"/>
<dbReference type="PDBsum" id="4DGC"/>
<dbReference type="PDBsum" id="4DGD"/>
<dbReference type="PDBsum" id="4DGE"/>
<dbReference type="BMRB" id="P62940"/>
<dbReference type="SMR" id="P62940"/>
<dbReference type="DIP" id="DIP-48565N"/>
<dbReference type="FunCoup" id="P62940">
    <property type="interactions" value="1456"/>
</dbReference>
<dbReference type="IntAct" id="P62940">
    <property type="interactions" value="2"/>
</dbReference>
<dbReference type="STRING" id="9544.ENSMMUP00000021879"/>
<dbReference type="GlyCosmos" id="P62940">
    <property type="glycosylation" value="1 site, No reported glycans"/>
</dbReference>
<dbReference type="PaxDb" id="9544-ENSMMUP00000021879"/>
<dbReference type="Ensembl" id="ENSMMUT00000023383.4">
    <property type="protein sequence ID" value="ENSMMUP00000021879.2"/>
    <property type="gene ID" value="ENSMMUG00000016638.4"/>
</dbReference>
<dbReference type="GeneID" id="574102"/>
<dbReference type="KEGG" id="mcc:574102"/>
<dbReference type="CTD" id="5478"/>
<dbReference type="VEuPathDB" id="HostDB:ENSMMUG00000016638"/>
<dbReference type="eggNOG" id="KOG0865">
    <property type="taxonomic scope" value="Eukaryota"/>
</dbReference>
<dbReference type="GeneTree" id="ENSGT00950000183087"/>
<dbReference type="HOGENOM" id="CLU_012062_4_3_1"/>
<dbReference type="InParanoid" id="P62940"/>
<dbReference type="OMA" id="CVSIYGH"/>
<dbReference type="OrthoDB" id="8959642at2759"/>
<dbReference type="TreeFam" id="TF316719"/>
<dbReference type="EvolutionaryTrace" id="P62940"/>
<dbReference type="PRO" id="PR:P62940"/>
<dbReference type="Proteomes" id="UP000006718">
    <property type="component" value="Chromosome 3"/>
</dbReference>
<dbReference type="Bgee" id="ENSMMUG00000016638">
    <property type="expression patterns" value="Expressed in prefrontal cortex and 20 other cell types or tissues"/>
</dbReference>
<dbReference type="ExpressionAtlas" id="P62940">
    <property type="expression patterns" value="baseline"/>
</dbReference>
<dbReference type="GO" id="GO:0005737">
    <property type="term" value="C:cytoplasm"/>
    <property type="evidence" value="ECO:0000250"/>
    <property type="project" value="UniProtKB"/>
</dbReference>
<dbReference type="GO" id="GO:0005829">
    <property type="term" value="C:cytosol"/>
    <property type="evidence" value="ECO:0000250"/>
    <property type="project" value="UniProtKB"/>
</dbReference>
<dbReference type="GO" id="GO:0005576">
    <property type="term" value="C:extracellular region"/>
    <property type="evidence" value="ECO:0000250"/>
    <property type="project" value="UniProtKB"/>
</dbReference>
<dbReference type="GO" id="GO:0005634">
    <property type="term" value="C:nucleus"/>
    <property type="evidence" value="ECO:0000250"/>
    <property type="project" value="UniProtKB"/>
</dbReference>
<dbReference type="GO" id="GO:0032991">
    <property type="term" value="C:protein-containing complex"/>
    <property type="evidence" value="ECO:0007669"/>
    <property type="project" value="Ensembl"/>
</dbReference>
<dbReference type="GO" id="GO:0016018">
    <property type="term" value="F:cyclosporin A binding"/>
    <property type="evidence" value="ECO:0000318"/>
    <property type="project" value="GO_Central"/>
</dbReference>
<dbReference type="GO" id="GO:1904399">
    <property type="term" value="F:heparan sulfate binding"/>
    <property type="evidence" value="ECO:0000250"/>
    <property type="project" value="UniProtKB"/>
</dbReference>
<dbReference type="GO" id="GO:0005178">
    <property type="term" value="F:integrin binding"/>
    <property type="evidence" value="ECO:0000250"/>
    <property type="project" value="UniProtKB"/>
</dbReference>
<dbReference type="GO" id="GO:0003755">
    <property type="term" value="F:peptidyl-prolyl cis-trans isomerase activity"/>
    <property type="evidence" value="ECO:0000250"/>
    <property type="project" value="UniProtKB"/>
</dbReference>
<dbReference type="GO" id="GO:0032148">
    <property type="term" value="P:activation of protein kinase B activity"/>
    <property type="evidence" value="ECO:0000250"/>
    <property type="project" value="UniProtKB"/>
</dbReference>
<dbReference type="GO" id="GO:0006915">
    <property type="term" value="P:apoptotic process"/>
    <property type="evidence" value="ECO:0000250"/>
    <property type="project" value="UniProtKB"/>
</dbReference>
<dbReference type="GO" id="GO:0060352">
    <property type="term" value="P:cell adhesion molecule production"/>
    <property type="evidence" value="ECO:0000250"/>
    <property type="project" value="UniProtKB"/>
</dbReference>
<dbReference type="GO" id="GO:0034599">
    <property type="term" value="P:cellular response to oxidative stress"/>
    <property type="evidence" value="ECO:0000250"/>
    <property type="project" value="UniProtKB"/>
</dbReference>
<dbReference type="GO" id="GO:0042118">
    <property type="term" value="P:endothelial cell activation"/>
    <property type="evidence" value="ECO:0000250"/>
    <property type="project" value="UniProtKB"/>
</dbReference>
<dbReference type="GO" id="GO:0030595">
    <property type="term" value="P:leukocyte chemotaxis"/>
    <property type="evidence" value="ECO:0000250"/>
    <property type="project" value="UniProtKB"/>
</dbReference>
<dbReference type="GO" id="GO:0034389">
    <property type="term" value="P:lipid droplet organization"/>
    <property type="evidence" value="ECO:0007669"/>
    <property type="project" value="Ensembl"/>
</dbReference>
<dbReference type="GO" id="GO:1902176">
    <property type="term" value="P:negative regulation of oxidative stress-induced intrinsic apoptotic signaling pathway"/>
    <property type="evidence" value="ECO:0000250"/>
    <property type="project" value="UniProtKB"/>
</dbReference>
<dbReference type="GO" id="GO:0061944">
    <property type="term" value="P:negative regulation of protein K48-linked ubiquitination"/>
    <property type="evidence" value="ECO:0000250"/>
    <property type="project" value="UniProtKB"/>
</dbReference>
<dbReference type="GO" id="GO:0006469">
    <property type="term" value="P:negative regulation of protein kinase activity"/>
    <property type="evidence" value="ECO:0000250"/>
    <property type="project" value="UniProtKB"/>
</dbReference>
<dbReference type="GO" id="GO:0001933">
    <property type="term" value="P:negative regulation of protein phosphorylation"/>
    <property type="evidence" value="ECO:0000250"/>
    <property type="project" value="UniProtKB"/>
</dbReference>
<dbReference type="GO" id="GO:0032873">
    <property type="term" value="P:negative regulation of stress-activated MAPK cascade"/>
    <property type="evidence" value="ECO:0000250"/>
    <property type="project" value="UniProtKB"/>
</dbReference>
<dbReference type="GO" id="GO:1903901">
    <property type="term" value="P:negative regulation of viral life cycle"/>
    <property type="evidence" value="ECO:0007669"/>
    <property type="project" value="Ensembl"/>
</dbReference>
<dbReference type="GO" id="GO:0030593">
    <property type="term" value="P:neutrophil chemotaxis"/>
    <property type="evidence" value="ECO:0000250"/>
    <property type="project" value="UniProtKB"/>
</dbReference>
<dbReference type="GO" id="GO:0030168">
    <property type="term" value="P:platelet activation"/>
    <property type="evidence" value="ECO:0000250"/>
    <property type="project" value="UniProtKB"/>
</dbReference>
<dbReference type="GO" id="GO:0070527">
    <property type="term" value="P:platelet aggregation"/>
    <property type="evidence" value="ECO:0000250"/>
    <property type="project" value="UniProtKB"/>
</dbReference>
<dbReference type="GO" id="GO:0043410">
    <property type="term" value="P:positive regulation of MAPK cascade"/>
    <property type="evidence" value="ECO:0000250"/>
    <property type="project" value="UniProtKB"/>
</dbReference>
<dbReference type="GO" id="GO:0051092">
    <property type="term" value="P:positive regulation of NF-kappaB transcription factor activity"/>
    <property type="evidence" value="ECO:0000250"/>
    <property type="project" value="UniProtKB"/>
</dbReference>
<dbReference type="GO" id="GO:0001934">
    <property type="term" value="P:positive regulation of protein phosphorylation"/>
    <property type="evidence" value="ECO:0000250"/>
    <property type="project" value="UniProtKB"/>
</dbReference>
<dbReference type="GO" id="GO:0050714">
    <property type="term" value="P:positive regulation of protein secretion"/>
    <property type="evidence" value="ECO:0007669"/>
    <property type="project" value="Ensembl"/>
</dbReference>
<dbReference type="GO" id="GO:0045070">
    <property type="term" value="P:positive regulation of viral genome replication"/>
    <property type="evidence" value="ECO:0007669"/>
    <property type="project" value="Ensembl"/>
</dbReference>
<dbReference type="GO" id="GO:0006457">
    <property type="term" value="P:protein folding"/>
    <property type="evidence" value="ECO:0000318"/>
    <property type="project" value="GO_Central"/>
</dbReference>
<dbReference type="GO" id="GO:0000413">
    <property type="term" value="P:protein peptidyl-prolyl isomerization"/>
    <property type="evidence" value="ECO:0000250"/>
    <property type="project" value="UniProtKB"/>
</dbReference>
<dbReference type="GO" id="GO:2001233">
    <property type="term" value="P:regulation of apoptotic signaling pathway"/>
    <property type="evidence" value="ECO:0000250"/>
    <property type="project" value="UniProtKB"/>
</dbReference>
<dbReference type="GO" id="GO:0045069">
    <property type="term" value="P:regulation of viral genome replication"/>
    <property type="evidence" value="ECO:0000250"/>
    <property type="project" value="UniProtKB"/>
</dbReference>
<dbReference type="CDD" id="cd01926">
    <property type="entry name" value="cyclophilin_ABH_like"/>
    <property type="match status" value="1"/>
</dbReference>
<dbReference type="FunFam" id="2.40.100.10:FF:000011">
    <property type="entry name" value="Peptidyl-prolyl cis-trans isomerase A"/>
    <property type="match status" value="1"/>
</dbReference>
<dbReference type="Gene3D" id="2.40.100.10">
    <property type="entry name" value="Cyclophilin-like"/>
    <property type="match status" value="1"/>
</dbReference>
<dbReference type="InterPro" id="IPR029000">
    <property type="entry name" value="Cyclophilin-like_dom_sf"/>
</dbReference>
<dbReference type="InterPro" id="IPR024936">
    <property type="entry name" value="Cyclophilin-type_PPIase"/>
</dbReference>
<dbReference type="InterPro" id="IPR020892">
    <property type="entry name" value="Cyclophilin-type_PPIase_CS"/>
</dbReference>
<dbReference type="InterPro" id="IPR002130">
    <property type="entry name" value="Cyclophilin-type_PPIase_dom"/>
</dbReference>
<dbReference type="PANTHER" id="PTHR11071">
    <property type="entry name" value="PEPTIDYL-PROLYL CIS-TRANS ISOMERASE"/>
    <property type="match status" value="1"/>
</dbReference>
<dbReference type="PANTHER" id="PTHR11071:SF490">
    <property type="entry name" value="PEPTIDYL-PROLYL CIS-TRANS ISOMERASE A"/>
    <property type="match status" value="1"/>
</dbReference>
<dbReference type="Pfam" id="PF00160">
    <property type="entry name" value="Pro_isomerase"/>
    <property type="match status" value="1"/>
</dbReference>
<dbReference type="PIRSF" id="PIRSF001467">
    <property type="entry name" value="Peptidylpro_ismrse"/>
    <property type="match status" value="1"/>
</dbReference>
<dbReference type="PRINTS" id="PR00153">
    <property type="entry name" value="CSAPPISMRASE"/>
</dbReference>
<dbReference type="SUPFAM" id="SSF50891">
    <property type="entry name" value="Cyclophilin-like"/>
    <property type="match status" value="1"/>
</dbReference>
<dbReference type="PROSITE" id="PS00170">
    <property type="entry name" value="CSA_PPIASE_1"/>
    <property type="match status" value="1"/>
</dbReference>
<dbReference type="PROSITE" id="PS50072">
    <property type="entry name" value="CSA_PPIASE_2"/>
    <property type="match status" value="1"/>
</dbReference>
<keyword id="KW-0002">3D-structure</keyword>
<keyword id="KW-0007">Acetylation</keyword>
<keyword id="KW-0053">Apoptosis</keyword>
<keyword id="KW-0963">Cytoplasm</keyword>
<keyword id="KW-0325">Glycoprotein</keyword>
<keyword id="KW-0413">Isomerase</keyword>
<keyword id="KW-1017">Isopeptide bond</keyword>
<keyword id="KW-0539">Nucleus</keyword>
<keyword id="KW-0597">Phosphoprotein</keyword>
<keyword id="KW-1185">Reference proteome</keyword>
<keyword id="KW-0697">Rotamase</keyword>
<keyword id="KW-0964">Secreted</keyword>
<keyword id="KW-0832">Ubl conjugation</keyword>
<accession>P62940</accession>
<accession>P05092</accession>
<accession>Q0ZQK4</accession>
<accession>Q96IX3</accession>
<accession>Q9BRU4</accession>
<accession>Q9BTY9</accession>
<accession>Q9UC61</accession>
<reference key="1">
    <citation type="submission" date="1997-09" db="EMBL/GenBank/DDBJ databases">
        <authorList>
            <person name="Luban J."/>
            <person name="Yin L."/>
        </authorList>
    </citation>
    <scope>NUCLEOTIDE SEQUENCE [MRNA]</scope>
</reference>
<reference key="2">
    <citation type="journal article" date="2006" name="Retrovirology">
        <title>Patterns of evolution of host proteins involved in retroviral pathogenesis.</title>
        <authorList>
            <person name="Ortiz M."/>
            <person name="Bleiber G."/>
            <person name="Martinez R."/>
            <person name="Kaessmann H."/>
            <person name="Telenti A."/>
        </authorList>
    </citation>
    <scope>NUCLEOTIDE SEQUENCE [GENOMIC DNA]</scope>
</reference>
<organism>
    <name type="scientific">Macaca mulatta</name>
    <name type="common">Rhesus macaque</name>
    <dbReference type="NCBI Taxonomy" id="9544"/>
    <lineage>
        <taxon>Eukaryota</taxon>
        <taxon>Metazoa</taxon>
        <taxon>Chordata</taxon>
        <taxon>Craniata</taxon>
        <taxon>Vertebrata</taxon>
        <taxon>Euteleostomi</taxon>
        <taxon>Mammalia</taxon>
        <taxon>Eutheria</taxon>
        <taxon>Euarchontoglires</taxon>
        <taxon>Primates</taxon>
        <taxon>Haplorrhini</taxon>
        <taxon>Catarrhini</taxon>
        <taxon>Cercopithecidae</taxon>
        <taxon>Cercopithecinae</taxon>
        <taxon>Macaca</taxon>
    </lineage>
</organism>
<gene>
    <name type="primary">PPIA</name>
    <name type="synonym">CYPA</name>
</gene>
<evidence type="ECO:0000250" key="1">
    <source>
        <dbReference type="UniProtKB" id="P17742"/>
    </source>
</evidence>
<evidence type="ECO:0000250" key="2">
    <source>
        <dbReference type="UniProtKB" id="P62937"/>
    </source>
</evidence>
<evidence type="ECO:0000255" key="3"/>
<evidence type="ECO:0000255" key="4">
    <source>
        <dbReference type="PROSITE-ProRule" id="PRU00156"/>
    </source>
</evidence>
<evidence type="ECO:0000305" key="5"/>
<evidence type="ECO:0007829" key="6">
    <source>
        <dbReference type="PDB" id="4DGC"/>
    </source>
</evidence>
<evidence type="ECO:0007829" key="7">
    <source>
        <dbReference type="PDB" id="4DGD"/>
    </source>
</evidence>
<sequence>MVNPTVFFDIAVDGEPLGRVSFELFADKVPKTAENFRALSTGEKGFGYKGSCFHRIIPGFMCQGGDFTRHNGTGGKSIYGEKFEDENFILKHTGPGILSMANAGPNTNGSQFFICTAKTEWLDGKHVVFGKVKEGMNIVEAMERFGSRNGKTSKKITIADCGQLE</sequence>
<feature type="chain" id="PRO_0000423244" description="Peptidyl-prolyl cis-trans isomerase A">
    <location>
        <begin position="1"/>
        <end position="165"/>
    </location>
</feature>
<feature type="initiator methionine" description="Removed; alternate" evidence="2">
    <location>
        <position position="1"/>
    </location>
</feature>
<feature type="chain" id="PRO_0000064116" description="Peptidyl-prolyl cis-trans isomerase A, N-terminally processed">
    <location>
        <begin position="2"/>
        <end position="165"/>
    </location>
</feature>
<feature type="domain" description="PPIase cyclophilin-type" evidence="4">
    <location>
        <begin position="7"/>
        <end position="163"/>
    </location>
</feature>
<feature type="modified residue" description="N-acetylmethionine" evidence="2">
    <location>
        <position position="1"/>
    </location>
</feature>
<feature type="modified residue" description="N-acetylvaline; in Peptidyl-prolyl cis-trans isomerase A, N-terminally processed" evidence="2">
    <location>
        <position position="2"/>
    </location>
</feature>
<feature type="modified residue" description="N6-acetyllysine; alternate" evidence="2">
    <location>
        <position position="28"/>
    </location>
</feature>
<feature type="modified residue" description="N6-acetyllysine" evidence="2">
    <location>
        <position position="44"/>
    </location>
</feature>
<feature type="modified residue" description="N6-acetyllysine" evidence="2">
    <location>
        <position position="76"/>
    </location>
</feature>
<feature type="modified residue" description="Phosphoserine" evidence="2">
    <location>
        <position position="77"/>
    </location>
</feature>
<feature type="modified residue" description="N6-acetyllysine; alternate" evidence="2">
    <location>
        <position position="82"/>
    </location>
</feature>
<feature type="modified residue" description="Phosphothreonine" evidence="2">
    <location>
        <position position="93"/>
    </location>
</feature>
<feature type="modified residue" description="N6-acetyllysine" evidence="2">
    <location>
        <position position="125"/>
    </location>
</feature>
<feature type="modified residue" description="N6-acetyllysine" evidence="2">
    <location>
        <position position="131"/>
    </location>
</feature>
<feature type="modified residue" description="N6-acetyllysine" evidence="1">
    <location>
        <position position="133"/>
    </location>
</feature>
<feature type="glycosylation site" description="N-linked (GlcNAc...) asparagine" evidence="3">
    <location>
        <position position="108"/>
    </location>
</feature>
<feature type="cross-link" description="Glycyl lysine isopeptide (Lys-Gly) (interchain with G-Cter in SUMO2); alternate" evidence="2">
    <location>
        <position position="28"/>
    </location>
</feature>
<feature type="cross-link" description="Glycyl lysine isopeptide (Lys-Gly) (interchain with G-Cter in ubiquitin); alternate" evidence="2">
    <location>
        <position position="28"/>
    </location>
</feature>
<feature type="cross-link" description="Glycyl lysine isopeptide (Lys-Gly) (interchain with G-Cter in SUMO2); alternate" evidence="2">
    <location>
        <position position="82"/>
    </location>
</feature>
<feature type="strand" evidence="7">
    <location>
        <begin position="5"/>
        <end position="12"/>
    </location>
</feature>
<feature type="strand" evidence="7">
    <location>
        <begin position="15"/>
        <end position="24"/>
    </location>
</feature>
<feature type="turn" evidence="7">
    <location>
        <begin position="26"/>
        <end position="28"/>
    </location>
</feature>
<feature type="helix" evidence="7">
    <location>
        <begin position="30"/>
        <end position="41"/>
    </location>
</feature>
<feature type="turn" evidence="7">
    <location>
        <begin position="42"/>
        <end position="44"/>
    </location>
</feature>
<feature type="strand" evidence="7">
    <location>
        <begin position="55"/>
        <end position="57"/>
    </location>
</feature>
<feature type="turn" evidence="7">
    <location>
        <begin position="58"/>
        <end position="60"/>
    </location>
</feature>
<feature type="strand" evidence="7">
    <location>
        <begin position="61"/>
        <end position="64"/>
    </location>
</feature>
<feature type="strand" evidence="7">
    <location>
        <begin position="72"/>
        <end position="74"/>
    </location>
</feature>
<feature type="strand" evidence="7">
    <location>
        <begin position="97"/>
        <end position="100"/>
    </location>
</feature>
<feature type="strand" evidence="6">
    <location>
        <begin position="102"/>
        <end position="104"/>
    </location>
</feature>
<feature type="strand" evidence="7">
    <location>
        <begin position="112"/>
        <end position="117"/>
    </location>
</feature>
<feature type="helix" evidence="7">
    <location>
        <begin position="120"/>
        <end position="122"/>
    </location>
</feature>
<feature type="turn" evidence="7">
    <location>
        <begin position="123"/>
        <end position="125"/>
    </location>
</feature>
<feature type="strand" evidence="7">
    <location>
        <begin position="128"/>
        <end position="132"/>
    </location>
</feature>
<feature type="helix" evidence="7">
    <location>
        <begin position="136"/>
        <end position="143"/>
    </location>
</feature>
<feature type="strand" evidence="7">
    <location>
        <begin position="156"/>
        <end position="163"/>
    </location>
</feature>